<sequence>MSAVVIEPGVTQRQAGKPAFEANKLSKRLHRLVGQAIGDFNMIEPGDKLMVCVSGGKDSYALLDILLNLQQRAPIDFSLVAVNLDQKQPDFPEHVLPEYLASRGVPFHIENQDTYSIVKRVVPEGKTMCSLCSRLRRGILYRVAGELGATKIALGHHRDDMLQTLFLNMFFGAKLKGMPPKLVSDDGRHVVIRPLAYVPEHDLEAWAAHRQFPIIPCTLCGSQENLQRKQIAQMLRDWERQHPGRLDNMASALANVVPSHLQDRNLYPFTTLQATGRADELGDKAFDDDETCAPPGAASVIEAAMPIRWHGQG</sequence>
<name>TTCA_METPP</name>
<dbReference type="EC" id="2.8.1.-" evidence="1"/>
<dbReference type="EMBL" id="CP000555">
    <property type="protein sequence ID" value="ABM93516.1"/>
    <property type="molecule type" value="Genomic_DNA"/>
</dbReference>
<dbReference type="RefSeq" id="WP_011828154.1">
    <property type="nucleotide sequence ID" value="NC_008825.1"/>
</dbReference>
<dbReference type="SMR" id="A2SD77"/>
<dbReference type="STRING" id="420662.Mpe_A0554"/>
<dbReference type="KEGG" id="mpt:Mpe_A0554"/>
<dbReference type="eggNOG" id="COG0037">
    <property type="taxonomic scope" value="Bacteria"/>
</dbReference>
<dbReference type="HOGENOM" id="CLU_026481_0_0_4"/>
<dbReference type="Proteomes" id="UP000000366">
    <property type="component" value="Chromosome"/>
</dbReference>
<dbReference type="GO" id="GO:0005737">
    <property type="term" value="C:cytoplasm"/>
    <property type="evidence" value="ECO:0007669"/>
    <property type="project" value="UniProtKB-SubCell"/>
</dbReference>
<dbReference type="GO" id="GO:0051539">
    <property type="term" value="F:4 iron, 4 sulfur cluster binding"/>
    <property type="evidence" value="ECO:0007669"/>
    <property type="project" value="UniProtKB-UniRule"/>
</dbReference>
<dbReference type="GO" id="GO:0005524">
    <property type="term" value="F:ATP binding"/>
    <property type="evidence" value="ECO:0007669"/>
    <property type="project" value="UniProtKB-UniRule"/>
</dbReference>
<dbReference type="GO" id="GO:0000287">
    <property type="term" value="F:magnesium ion binding"/>
    <property type="evidence" value="ECO:0007669"/>
    <property type="project" value="UniProtKB-UniRule"/>
</dbReference>
<dbReference type="GO" id="GO:0016783">
    <property type="term" value="F:sulfurtransferase activity"/>
    <property type="evidence" value="ECO:0007669"/>
    <property type="project" value="UniProtKB-UniRule"/>
</dbReference>
<dbReference type="GO" id="GO:0000049">
    <property type="term" value="F:tRNA binding"/>
    <property type="evidence" value="ECO:0007669"/>
    <property type="project" value="UniProtKB-KW"/>
</dbReference>
<dbReference type="GO" id="GO:0034227">
    <property type="term" value="P:tRNA thio-modification"/>
    <property type="evidence" value="ECO:0007669"/>
    <property type="project" value="UniProtKB-UniRule"/>
</dbReference>
<dbReference type="CDD" id="cd24138">
    <property type="entry name" value="TtcA-like"/>
    <property type="match status" value="1"/>
</dbReference>
<dbReference type="Gene3D" id="3.40.50.620">
    <property type="entry name" value="HUPs"/>
    <property type="match status" value="1"/>
</dbReference>
<dbReference type="HAMAP" id="MF_01850">
    <property type="entry name" value="TtcA"/>
    <property type="match status" value="1"/>
</dbReference>
<dbReference type="InterPro" id="IPR014729">
    <property type="entry name" value="Rossmann-like_a/b/a_fold"/>
</dbReference>
<dbReference type="InterPro" id="IPR011063">
    <property type="entry name" value="TilS/TtcA_N"/>
</dbReference>
<dbReference type="InterPro" id="IPR012089">
    <property type="entry name" value="tRNA_Cyd_32_2_STrfase"/>
</dbReference>
<dbReference type="InterPro" id="IPR035107">
    <property type="entry name" value="tRNA_thiolation_TtcA_Ctu1"/>
</dbReference>
<dbReference type="NCBIfam" id="NF007972">
    <property type="entry name" value="PRK10696.1"/>
    <property type="match status" value="1"/>
</dbReference>
<dbReference type="PANTHER" id="PTHR43686:SF1">
    <property type="entry name" value="AMINOTRAN_5 DOMAIN-CONTAINING PROTEIN"/>
    <property type="match status" value="1"/>
</dbReference>
<dbReference type="PANTHER" id="PTHR43686">
    <property type="entry name" value="SULFURTRANSFERASE-RELATED"/>
    <property type="match status" value="1"/>
</dbReference>
<dbReference type="Pfam" id="PF01171">
    <property type="entry name" value="ATP_bind_3"/>
    <property type="match status" value="1"/>
</dbReference>
<dbReference type="PIRSF" id="PIRSF004976">
    <property type="entry name" value="ATPase_YdaO"/>
    <property type="match status" value="1"/>
</dbReference>
<dbReference type="SUPFAM" id="SSF52402">
    <property type="entry name" value="Adenine nucleotide alpha hydrolases-like"/>
    <property type="match status" value="1"/>
</dbReference>
<proteinExistence type="inferred from homology"/>
<feature type="chain" id="PRO_0000348767" description="tRNA-cytidine(32) 2-sulfurtransferase">
    <location>
        <begin position="1"/>
        <end position="313"/>
    </location>
</feature>
<feature type="short sequence motif" description="PP-loop motif" evidence="1">
    <location>
        <begin position="54"/>
        <end position="59"/>
    </location>
</feature>
<feature type="binding site" evidence="1">
    <location>
        <position position="129"/>
    </location>
    <ligand>
        <name>[4Fe-4S] cluster</name>
        <dbReference type="ChEBI" id="CHEBI:49883"/>
    </ligand>
</feature>
<feature type="binding site" evidence="1">
    <location>
        <position position="132"/>
    </location>
    <ligand>
        <name>[4Fe-4S] cluster</name>
        <dbReference type="ChEBI" id="CHEBI:49883"/>
    </ligand>
</feature>
<feature type="binding site" evidence="1">
    <location>
        <position position="220"/>
    </location>
    <ligand>
        <name>[4Fe-4S] cluster</name>
        <dbReference type="ChEBI" id="CHEBI:49883"/>
    </ligand>
</feature>
<evidence type="ECO:0000255" key="1">
    <source>
        <dbReference type="HAMAP-Rule" id="MF_01850"/>
    </source>
</evidence>
<organism>
    <name type="scientific">Methylibium petroleiphilum (strain ATCC BAA-1232 / LMG 22953 / PM1)</name>
    <dbReference type="NCBI Taxonomy" id="420662"/>
    <lineage>
        <taxon>Bacteria</taxon>
        <taxon>Pseudomonadati</taxon>
        <taxon>Pseudomonadota</taxon>
        <taxon>Betaproteobacteria</taxon>
        <taxon>Burkholderiales</taxon>
        <taxon>Sphaerotilaceae</taxon>
        <taxon>Methylibium</taxon>
    </lineage>
</organism>
<protein>
    <recommendedName>
        <fullName evidence="1">tRNA-cytidine(32) 2-sulfurtransferase</fullName>
        <ecNumber evidence="1">2.8.1.-</ecNumber>
    </recommendedName>
    <alternativeName>
        <fullName evidence="1">Two-thiocytidine biosynthesis protein A</fullName>
    </alternativeName>
    <alternativeName>
        <fullName evidence="1">tRNA 2-thiocytidine biosynthesis protein TtcA</fullName>
    </alternativeName>
</protein>
<gene>
    <name evidence="1" type="primary">ttcA</name>
    <name type="ordered locus">Mpe_A0554</name>
</gene>
<accession>A2SD77</accession>
<keyword id="KW-0004">4Fe-4S</keyword>
<keyword id="KW-0067">ATP-binding</keyword>
<keyword id="KW-0963">Cytoplasm</keyword>
<keyword id="KW-0408">Iron</keyword>
<keyword id="KW-0411">Iron-sulfur</keyword>
<keyword id="KW-0460">Magnesium</keyword>
<keyword id="KW-0479">Metal-binding</keyword>
<keyword id="KW-0547">Nucleotide-binding</keyword>
<keyword id="KW-1185">Reference proteome</keyword>
<keyword id="KW-0694">RNA-binding</keyword>
<keyword id="KW-0808">Transferase</keyword>
<keyword id="KW-0819">tRNA processing</keyword>
<keyword id="KW-0820">tRNA-binding</keyword>
<comment type="function">
    <text evidence="1">Catalyzes the ATP-dependent 2-thiolation of cytidine in position 32 of tRNA, to form 2-thiocytidine (s(2)C32). The sulfur atoms are provided by the cysteine/cysteine desulfurase (IscS) system.</text>
</comment>
<comment type="catalytic activity">
    <reaction evidence="1">
        <text>cytidine(32) in tRNA + S-sulfanyl-L-cysteinyl-[cysteine desulfurase] + AH2 + ATP = 2-thiocytidine(32) in tRNA + L-cysteinyl-[cysteine desulfurase] + A + AMP + diphosphate + H(+)</text>
        <dbReference type="Rhea" id="RHEA:57048"/>
        <dbReference type="Rhea" id="RHEA-COMP:10288"/>
        <dbReference type="Rhea" id="RHEA-COMP:12157"/>
        <dbReference type="Rhea" id="RHEA-COMP:12158"/>
        <dbReference type="Rhea" id="RHEA-COMP:14821"/>
        <dbReference type="ChEBI" id="CHEBI:13193"/>
        <dbReference type="ChEBI" id="CHEBI:15378"/>
        <dbReference type="ChEBI" id="CHEBI:17499"/>
        <dbReference type="ChEBI" id="CHEBI:29950"/>
        <dbReference type="ChEBI" id="CHEBI:30616"/>
        <dbReference type="ChEBI" id="CHEBI:33019"/>
        <dbReference type="ChEBI" id="CHEBI:61963"/>
        <dbReference type="ChEBI" id="CHEBI:82748"/>
        <dbReference type="ChEBI" id="CHEBI:141453"/>
        <dbReference type="ChEBI" id="CHEBI:456215"/>
    </reaction>
    <physiologicalReaction direction="left-to-right" evidence="1">
        <dbReference type="Rhea" id="RHEA:57049"/>
    </physiologicalReaction>
</comment>
<comment type="cofactor">
    <cofactor evidence="1">
        <name>Mg(2+)</name>
        <dbReference type="ChEBI" id="CHEBI:18420"/>
    </cofactor>
</comment>
<comment type="cofactor">
    <cofactor evidence="1">
        <name>[4Fe-4S] cluster</name>
        <dbReference type="ChEBI" id="CHEBI:49883"/>
    </cofactor>
    <text evidence="1">Binds 1 [4Fe-4S] cluster per subunit. The cluster is chelated by three Cys residues, the fourth Fe has a free coordination site that may bind a sulfur atom transferred from the persulfide of IscS.</text>
</comment>
<comment type="pathway">
    <text evidence="1">tRNA modification.</text>
</comment>
<comment type="subunit">
    <text evidence="1">Homodimer.</text>
</comment>
<comment type="subcellular location">
    <subcellularLocation>
        <location evidence="1">Cytoplasm</location>
    </subcellularLocation>
</comment>
<comment type="miscellaneous">
    <text evidence="1">The thiolation reaction likely consists of two steps: a first activation step by ATP to form an adenylated intermediate of the target base of tRNA, and a second nucleophilic substitution step of the sulfur (S) atom supplied by the hydrosulfide attached to the Fe-S cluster.</text>
</comment>
<comment type="similarity">
    <text evidence="1">Belongs to the TtcA family.</text>
</comment>
<reference key="1">
    <citation type="journal article" date="2007" name="J. Bacteriol.">
        <title>Whole-genome analysis of the methyl tert-butyl ether-degrading beta-proteobacterium Methylibium petroleiphilum PM1.</title>
        <authorList>
            <person name="Kane S.R."/>
            <person name="Chakicherla A.Y."/>
            <person name="Chain P.S.G."/>
            <person name="Schmidt R."/>
            <person name="Shin M.W."/>
            <person name="Legler T.C."/>
            <person name="Scow K.M."/>
            <person name="Larimer F.W."/>
            <person name="Lucas S.M."/>
            <person name="Richardson P.M."/>
            <person name="Hristova K.R."/>
        </authorList>
    </citation>
    <scope>NUCLEOTIDE SEQUENCE [LARGE SCALE GENOMIC DNA]</scope>
    <source>
        <strain>ATCC BAA-1232 / LMG 22953 / PM1</strain>
    </source>
</reference>